<organism>
    <name type="scientific">Saccharomyces cerevisiae (strain YJM789)</name>
    <name type="common">Baker's yeast</name>
    <dbReference type="NCBI Taxonomy" id="307796"/>
    <lineage>
        <taxon>Eukaryota</taxon>
        <taxon>Fungi</taxon>
        <taxon>Dikarya</taxon>
        <taxon>Ascomycota</taxon>
        <taxon>Saccharomycotina</taxon>
        <taxon>Saccharomycetes</taxon>
        <taxon>Saccharomycetales</taxon>
        <taxon>Saccharomycetaceae</taxon>
        <taxon>Saccharomyces</taxon>
    </lineage>
</organism>
<comment type="function">
    <text evidence="1">Component of the MICOS complex, a large protein complex of the mitochondrial inner membrane that plays crucial roles in the maintenance of crista junctions, inner membrane architecture, and formation of contact sites to the outer membrane. Plays a role in keeping cristae membranes connected to the inner boundary membrane. Also promotes protein import via the mitochondrial intermembrane space assembly (MIA) pathway (By similarity).</text>
</comment>
<comment type="subunit">
    <text evidence="1">Component of the mitochondrial contact site and cristae organizing system (MICOS) complex.</text>
</comment>
<comment type="subcellular location">
    <subcellularLocation>
        <location evidence="1">Mitochondrion inner membrane</location>
        <topology evidence="1">Single-pass membrane protein</topology>
    </subcellularLocation>
</comment>
<comment type="similarity">
    <text evidence="3">Belongs to the MICOS complex subunit Mic60 family.</text>
</comment>
<reference key="1">
    <citation type="journal article" date="2007" name="Proc. Natl. Acad. Sci. U.S.A.">
        <title>Genome sequencing and comparative analysis of Saccharomyces cerevisiae strain YJM789.</title>
        <authorList>
            <person name="Wei W."/>
            <person name="McCusker J.H."/>
            <person name="Hyman R.W."/>
            <person name="Jones T."/>
            <person name="Ning Y."/>
            <person name="Cao Z."/>
            <person name="Gu Z."/>
            <person name="Bruno D."/>
            <person name="Miranda M."/>
            <person name="Nguyen M."/>
            <person name="Wilhelmy J."/>
            <person name="Komp C."/>
            <person name="Tamse R."/>
            <person name="Wang X."/>
            <person name="Jia P."/>
            <person name="Luedi P."/>
            <person name="Oefner P.J."/>
            <person name="David L."/>
            <person name="Dietrich F.S."/>
            <person name="Li Y."/>
            <person name="Davis R.W."/>
            <person name="Steinmetz L.M."/>
        </authorList>
    </citation>
    <scope>NUCLEOTIDE SEQUENCE [LARGE SCALE GENOMIC DNA]</scope>
    <source>
        <strain>YJM789</strain>
    </source>
</reference>
<dbReference type="EMBL" id="AAFW02000152">
    <property type="protein sequence ID" value="EDN59923.1"/>
    <property type="molecule type" value="Genomic_DNA"/>
</dbReference>
<dbReference type="SMR" id="A6ZZY0"/>
<dbReference type="HOGENOM" id="CLU_008024_2_0_1"/>
<dbReference type="Proteomes" id="UP000007060">
    <property type="component" value="Unassembled WGS sequence"/>
</dbReference>
<dbReference type="GO" id="GO:0061617">
    <property type="term" value="C:MICOS complex"/>
    <property type="evidence" value="ECO:0007669"/>
    <property type="project" value="TreeGrafter"/>
</dbReference>
<dbReference type="GO" id="GO:0042407">
    <property type="term" value="P:cristae formation"/>
    <property type="evidence" value="ECO:0007669"/>
    <property type="project" value="TreeGrafter"/>
</dbReference>
<dbReference type="InterPro" id="IPR019133">
    <property type="entry name" value="MIC60"/>
</dbReference>
<dbReference type="PANTHER" id="PTHR15415:SF7">
    <property type="entry name" value="MICOS COMPLEX SUBUNIT MIC60"/>
    <property type="match status" value="1"/>
</dbReference>
<dbReference type="PANTHER" id="PTHR15415">
    <property type="entry name" value="MITOFILIN"/>
    <property type="match status" value="1"/>
</dbReference>
<dbReference type="Pfam" id="PF09731">
    <property type="entry name" value="Mitofilin"/>
    <property type="match status" value="3"/>
</dbReference>
<evidence type="ECO:0000250" key="1"/>
<evidence type="ECO:0000255" key="2"/>
<evidence type="ECO:0000305" key="3"/>
<feature type="transit peptide" description="Mitochondrion" evidence="2">
    <location>
        <begin position="1"/>
        <end position="16"/>
    </location>
</feature>
<feature type="chain" id="PRO_0000406682" description="MICOS complex subunit MIC60">
    <location>
        <begin position="17"/>
        <end position="539"/>
    </location>
</feature>
<feature type="topological domain" description="Mitochondrial matrix" evidence="2">
    <location>
        <begin position="17"/>
        <end position="36"/>
    </location>
</feature>
<feature type="transmembrane region" description="Helical" evidence="2">
    <location>
        <begin position="37"/>
        <end position="56"/>
    </location>
</feature>
<feature type="topological domain" description="Mitochondrial intermembrane" evidence="2">
    <location>
        <begin position="57"/>
        <end position="539"/>
    </location>
</feature>
<feature type="coiled-coil region" evidence="2">
    <location>
        <begin position="172"/>
        <end position="267"/>
    </location>
</feature>
<name>MIC60_YEAS7</name>
<sequence>MLRTTASRKIVLRRGLASINTGTTVASKKASHKFRNTFWTIALSATAFYAGGIIYSQKNDKFGDFFSNNVPFAEDLLETYEHYHDRPTLFLEDSWDGLKAKSNDLLSGLTGSSQTRRSNRENIEVKKILSLEPLNIETENSDPQLKEIIGSLNDLINSLNDSNLSIPESEFNSIKKSNQNMLTNLSQLNETLKEALSNYMIQRTSEVITELNTQYENSKREFEKNLQKNLLQEVDEFKENLTKQKDKELEEKLKANEELLQAKHANEVGLLSITQVKEFNKIIKDKIEKERNGRLAHLEEINSEVNDLSKSIDRSSKILSKNEALVQLTFQVDEIKSRINNNNLPDVNIDKELSRLKLLSNLLSTFNKKSCCDDGDCCSCKKGNKNEGKEGKISCKCKPKTNPPSLLSVALDELESTCSGKKILSNEQIYNRWNLLADDFKTASLLPPNSGILGQLTAKVFSLFLFTKTGNPSNATDFDSVYARVGDNLRVSNLNDAVEEVVSLKGWPHKVCESWIEDARRKLEVQRLVEILDCEIRTL</sequence>
<proteinExistence type="inferred from homology"/>
<protein>
    <recommendedName>
        <fullName>MICOS complex subunit MIC60</fullName>
    </recommendedName>
    <alternativeName>
        <fullName>Mitofilin</fullName>
    </alternativeName>
</protein>
<gene>
    <name type="primary">MIC60</name>
    <name type="ORF">SCY_3390</name>
</gene>
<accession>A6ZZY0</accession>
<keyword id="KW-0175">Coiled coil</keyword>
<keyword id="KW-0472">Membrane</keyword>
<keyword id="KW-0496">Mitochondrion</keyword>
<keyword id="KW-0999">Mitochondrion inner membrane</keyword>
<keyword id="KW-0809">Transit peptide</keyword>
<keyword id="KW-0812">Transmembrane</keyword>
<keyword id="KW-1133">Transmembrane helix</keyword>